<evidence type="ECO:0000255" key="1">
    <source>
        <dbReference type="HAMAP-Rule" id="MF_00558"/>
    </source>
</evidence>
<proteinExistence type="inferred from homology"/>
<keyword id="KW-0067">ATP-binding</keyword>
<keyword id="KW-0436">Ligase</keyword>
<keyword id="KW-0460">Magnesium</keyword>
<keyword id="KW-0479">Metal-binding</keyword>
<keyword id="KW-0547">Nucleotide-binding</keyword>
<keyword id="KW-0816">Tricarboxylic acid cycle</keyword>
<organism>
    <name type="scientific">Pseudomonas putida (strain W619)</name>
    <dbReference type="NCBI Taxonomy" id="390235"/>
    <lineage>
        <taxon>Bacteria</taxon>
        <taxon>Pseudomonadati</taxon>
        <taxon>Pseudomonadota</taxon>
        <taxon>Gammaproteobacteria</taxon>
        <taxon>Pseudomonadales</taxon>
        <taxon>Pseudomonadaceae</taxon>
        <taxon>Pseudomonas</taxon>
    </lineage>
</organism>
<sequence length="388" mass="41212">MNLHEYQGKQLFAEYGLPVSKGFAVDTPEQAAEACDKIGGSEWVVKAQVHAGGRGKAGGVKLVRSKEDAKAFAAQWLGKNLVTYQTDANGQPVSKILVESCTDIAKELYLGAVVDRSSRRIVFMASTEGGVDIEKVAHETPEKILKATIDPLVGAQPFQGRELAFQLGLEGKQVQQFAKIFVGLAKLFKDHDLALLEVNPLVIKADGDLHCLDAKINIDANAMYRQPKLKTFHDPSQDDAREAHAAKFELNYVALEGNIGCMVNGAGLAMGTMDIVNLHGGKPANFLDVGGGATKERVTEAFKIILSDSNVAAVLVNIFGGIVRCDMIAEGIIGAVKEVGVKVPVVVRLEGNNAELGAKVLAESGLNIIAATSLTDAAQQVVKAAEGK</sequence>
<reference key="1">
    <citation type="submission" date="2008-02" db="EMBL/GenBank/DDBJ databases">
        <title>Complete sequence of Pseudomonas putida W619.</title>
        <authorList>
            <person name="Copeland A."/>
            <person name="Lucas S."/>
            <person name="Lapidus A."/>
            <person name="Barry K."/>
            <person name="Detter J.C."/>
            <person name="Glavina del Rio T."/>
            <person name="Dalin E."/>
            <person name="Tice H."/>
            <person name="Pitluck S."/>
            <person name="Chain P."/>
            <person name="Malfatti S."/>
            <person name="Shin M."/>
            <person name="Vergez L."/>
            <person name="Schmutz J."/>
            <person name="Larimer F."/>
            <person name="Land M."/>
            <person name="Hauser L."/>
            <person name="Kyrpides N."/>
            <person name="Kim E."/>
            <person name="Taghavi S."/>
            <person name="Vangronsveld D."/>
            <person name="van der Lelie D."/>
            <person name="Richardson P."/>
        </authorList>
    </citation>
    <scope>NUCLEOTIDE SEQUENCE [LARGE SCALE GENOMIC DNA]</scope>
    <source>
        <strain>W619</strain>
    </source>
</reference>
<protein>
    <recommendedName>
        <fullName evidence="1">Succinate--CoA ligase [ADP-forming] subunit beta</fullName>
        <ecNumber evidence="1">6.2.1.5</ecNumber>
    </recommendedName>
    <alternativeName>
        <fullName evidence="1">Succinyl-CoA synthetase subunit beta</fullName>
        <shortName evidence="1">SCS-beta</shortName>
    </alternativeName>
</protein>
<accession>B1JAV3</accession>
<gene>
    <name evidence="1" type="primary">sucC</name>
    <name type="ordered locus">PputW619_3509</name>
</gene>
<feature type="chain" id="PRO_1000129213" description="Succinate--CoA ligase [ADP-forming] subunit beta">
    <location>
        <begin position="1"/>
        <end position="388"/>
    </location>
</feature>
<feature type="domain" description="ATP-grasp" evidence="1">
    <location>
        <begin position="9"/>
        <end position="244"/>
    </location>
</feature>
<feature type="binding site" evidence="1">
    <location>
        <position position="46"/>
    </location>
    <ligand>
        <name>ATP</name>
        <dbReference type="ChEBI" id="CHEBI:30616"/>
    </ligand>
</feature>
<feature type="binding site" evidence="1">
    <location>
        <begin position="53"/>
        <end position="55"/>
    </location>
    <ligand>
        <name>ATP</name>
        <dbReference type="ChEBI" id="CHEBI:30616"/>
    </ligand>
</feature>
<feature type="binding site" evidence="1">
    <location>
        <position position="99"/>
    </location>
    <ligand>
        <name>ATP</name>
        <dbReference type="ChEBI" id="CHEBI:30616"/>
    </ligand>
</feature>
<feature type="binding site" evidence="1">
    <location>
        <position position="102"/>
    </location>
    <ligand>
        <name>ATP</name>
        <dbReference type="ChEBI" id="CHEBI:30616"/>
    </ligand>
</feature>
<feature type="binding site" evidence="1">
    <location>
        <position position="107"/>
    </location>
    <ligand>
        <name>ATP</name>
        <dbReference type="ChEBI" id="CHEBI:30616"/>
    </ligand>
</feature>
<feature type="binding site" evidence="1">
    <location>
        <position position="199"/>
    </location>
    <ligand>
        <name>Mg(2+)</name>
        <dbReference type="ChEBI" id="CHEBI:18420"/>
    </ligand>
</feature>
<feature type="binding site" evidence="1">
    <location>
        <position position="213"/>
    </location>
    <ligand>
        <name>Mg(2+)</name>
        <dbReference type="ChEBI" id="CHEBI:18420"/>
    </ligand>
</feature>
<feature type="binding site" evidence="1">
    <location>
        <position position="264"/>
    </location>
    <ligand>
        <name>substrate</name>
        <note>ligand shared with subunit alpha</note>
    </ligand>
</feature>
<feature type="binding site" evidence="1">
    <location>
        <begin position="321"/>
        <end position="323"/>
    </location>
    <ligand>
        <name>substrate</name>
        <note>ligand shared with subunit alpha</note>
    </ligand>
</feature>
<dbReference type="EC" id="6.2.1.5" evidence="1"/>
<dbReference type="EMBL" id="CP000949">
    <property type="protein sequence ID" value="ACA73992.1"/>
    <property type="molecule type" value="Genomic_DNA"/>
</dbReference>
<dbReference type="SMR" id="B1JAV3"/>
<dbReference type="STRING" id="390235.PputW619_3509"/>
<dbReference type="KEGG" id="ppw:PputW619_3509"/>
<dbReference type="eggNOG" id="COG0045">
    <property type="taxonomic scope" value="Bacteria"/>
</dbReference>
<dbReference type="HOGENOM" id="CLU_037430_0_2_6"/>
<dbReference type="OrthoDB" id="9802602at2"/>
<dbReference type="UniPathway" id="UPA00223">
    <property type="reaction ID" value="UER00999"/>
</dbReference>
<dbReference type="GO" id="GO:0005829">
    <property type="term" value="C:cytosol"/>
    <property type="evidence" value="ECO:0007669"/>
    <property type="project" value="TreeGrafter"/>
</dbReference>
<dbReference type="GO" id="GO:0042709">
    <property type="term" value="C:succinate-CoA ligase complex"/>
    <property type="evidence" value="ECO:0007669"/>
    <property type="project" value="TreeGrafter"/>
</dbReference>
<dbReference type="GO" id="GO:0005524">
    <property type="term" value="F:ATP binding"/>
    <property type="evidence" value="ECO:0007669"/>
    <property type="project" value="UniProtKB-UniRule"/>
</dbReference>
<dbReference type="GO" id="GO:0000287">
    <property type="term" value="F:magnesium ion binding"/>
    <property type="evidence" value="ECO:0007669"/>
    <property type="project" value="UniProtKB-UniRule"/>
</dbReference>
<dbReference type="GO" id="GO:0004775">
    <property type="term" value="F:succinate-CoA ligase (ADP-forming) activity"/>
    <property type="evidence" value="ECO:0007669"/>
    <property type="project" value="UniProtKB-UniRule"/>
</dbReference>
<dbReference type="GO" id="GO:0004776">
    <property type="term" value="F:succinate-CoA ligase (GDP-forming) activity"/>
    <property type="evidence" value="ECO:0007669"/>
    <property type="project" value="RHEA"/>
</dbReference>
<dbReference type="GO" id="GO:0006104">
    <property type="term" value="P:succinyl-CoA metabolic process"/>
    <property type="evidence" value="ECO:0007669"/>
    <property type="project" value="TreeGrafter"/>
</dbReference>
<dbReference type="GO" id="GO:0006099">
    <property type="term" value="P:tricarboxylic acid cycle"/>
    <property type="evidence" value="ECO:0007669"/>
    <property type="project" value="UniProtKB-UniRule"/>
</dbReference>
<dbReference type="FunFam" id="3.30.1490.20:FF:000002">
    <property type="entry name" value="Succinate--CoA ligase [ADP-forming] subunit beta"/>
    <property type="match status" value="1"/>
</dbReference>
<dbReference type="FunFam" id="3.30.470.20:FF:000002">
    <property type="entry name" value="Succinate--CoA ligase [ADP-forming] subunit beta"/>
    <property type="match status" value="1"/>
</dbReference>
<dbReference type="FunFam" id="3.40.50.261:FF:000001">
    <property type="entry name" value="Succinate--CoA ligase [ADP-forming] subunit beta"/>
    <property type="match status" value="1"/>
</dbReference>
<dbReference type="Gene3D" id="3.30.1490.20">
    <property type="entry name" value="ATP-grasp fold, A domain"/>
    <property type="match status" value="1"/>
</dbReference>
<dbReference type="Gene3D" id="3.30.470.20">
    <property type="entry name" value="ATP-grasp fold, B domain"/>
    <property type="match status" value="1"/>
</dbReference>
<dbReference type="Gene3D" id="3.40.50.261">
    <property type="entry name" value="Succinyl-CoA synthetase domains"/>
    <property type="match status" value="1"/>
</dbReference>
<dbReference type="HAMAP" id="MF_00558">
    <property type="entry name" value="Succ_CoA_beta"/>
    <property type="match status" value="1"/>
</dbReference>
<dbReference type="InterPro" id="IPR011761">
    <property type="entry name" value="ATP-grasp"/>
</dbReference>
<dbReference type="InterPro" id="IPR013650">
    <property type="entry name" value="ATP-grasp_succ-CoA_synth-type"/>
</dbReference>
<dbReference type="InterPro" id="IPR013815">
    <property type="entry name" value="ATP_grasp_subdomain_1"/>
</dbReference>
<dbReference type="InterPro" id="IPR017866">
    <property type="entry name" value="Succ-CoA_synthase_bsu_CS"/>
</dbReference>
<dbReference type="InterPro" id="IPR005811">
    <property type="entry name" value="SUCC_ACL_C"/>
</dbReference>
<dbReference type="InterPro" id="IPR005809">
    <property type="entry name" value="Succ_CoA_ligase-like_bsu"/>
</dbReference>
<dbReference type="InterPro" id="IPR016102">
    <property type="entry name" value="Succinyl-CoA_synth-like"/>
</dbReference>
<dbReference type="NCBIfam" id="NF001913">
    <property type="entry name" value="PRK00696.1"/>
    <property type="match status" value="1"/>
</dbReference>
<dbReference type="NCBIfam" id="TIGR01016">
    <property type="entry name" value="sucCoAbeta"/>
    <property type="match status" value="1"/>
</dbReference>
<dbReference type="PANTHER" id="PTHR11815:SF10">
    <property type="entry name" value="SUCCINATE--COA LIGASE [GDP-FORMING] SUBUNIT BETA, MITOCHONDRIAL"/>
    <property type="match status" value="1"/>
</dbReference>
<dbReference type="PANTHER" id="PTHR11815">
    <property type="entry name" value="SUCCINYL-COA SYNTHETASE BETA CHAIN"/>
    <property type="match status" value="1"/>
</dbReference>
<dbReference type="Pfam" id="PF08442">
    <property type="entry name" value="ATP-grasp_2"/>
    <property type="match status" value="1"/>
</dbReference>
<dbReference type="Pfam" id="PF00549">
    <property type="entry name" value="Ligase_CoA"/>
    <property type="match status" value="1"/>
</dbReference>
<dbReference type="PIRSF" id="PIRSF001554">
    <property type="entry name" value="SucCS_beta"/>
    <property type="match status" value="1"/>
</dbReference>
<dbReference type="SUPFAM" id="SSF56059">
    <property type="entry name" value="Glutathione synthetase ATP-binding domain-like"/>
    <property type="match status" value="1"/>
</dbReference>
<dbReference type="SUPFAM" id="SSF52210">
    <property type="entry name" value="Succinyl-CoA synthetase domains"/>
    <property type="match status" value="1"/>
</dbReference>
<dbReference type="PROSITE" id="PS50975">
    <property type="entry name" value="ATP_GRASP"/>
    <property type="match status" value="1"/>
</dbReference>
<dbReference type="PROSITE" id="PS01217">
    <property type="entry name" value="SUCCINYL_COA_LIG_3"/>
    <property type="match status" value="1"/>
</dbReference>
<comment type="function">
    <text evidence="1">Succinyl-CoA synthetase functions in the citric acid cycle (TCA), coupling the hydrolysis of succinyl-CoA to the synthesis of either ATP or GTP and thus represents the only step of substrate-level phosphorylation in the TCA. The beta subunit provides nucleotide specificity of the enzyme and binds the substrate succinate, while the binding sites for coenzyme A and phosphate are found in the alpha subunit.</text>
</comment>
<comment type="catalytic activity">
    <reaction evidence="1">
        <text>succinate + ATP + CoA = succinyl-CoA + ADP + phosphate</text>
        <dbReference type="Rhea" id="RHEA:17661"/>
        <dbReference type="ChEBI" id="CHEBI:30031"/>
        <dbReference type="ChEBI" id="CHEBI:30616"/>
        <dbReference type="ChEBI" id="CHEBI:43474"/>
        <dbReference type="ChEBI" id="CHEBI:57287"/>
        <dbReference type="ChEBI" id="CHEBI:57292"/>
        <dbReference type="ChEBI" id="CHEBI:456216"/>
        <dbReference type="EC" id="6.2.1.5"/>
    </reaction>
    <physiologicalReaction direction="right-to-left" evidence="1">
        <dbReference type="Rhea" id="RHEA:17663"/>
    </physiologicalReaction>
</comment>
<comment type="catalytic activity">
    <reaction evidence="1">
        <text>GTP + succinate + CoA = succinyl-CoA + GDP + phosphate</text>
        <dbReference type="Rhea" id="RHEA:22120"/>
        <dbReference type="ChEBI" id="CHEBI:30031"/>
        <dbReference type="ChEBI" id="CHEBI:37565"/>
        <dbReference type="ChEBI" id="CHEBI:43474"/>
        <dbReference type="ChEBI" id="CHEBI:57287"/>
        <dbReference type="ChEBI" id="CHEBI:57292"/>
        <dbReference type="ChEBI" id="CHEBI:58189"/>
    </reaction>
    <physiologicalReaction direction="right-to-left" evidence="1">
        <dbReference type="Rhea" id="RHEA:22122"/>
    </physiologicalReaction>
</comment>
<comment type="cofactor">
    <cofactor evidence="1">
        <name>Mg(2+)</name>
        <dbReference type="ChEBI" id="CHEBI:18420"/>
    </cofactor>
    <text evidence="1">Binds 1 Mg(2+) ion per subunit.</text>
</comment>
<comment type="pathway">
    <text evidence="1">Carbohydrate metabolism; tricarboxylic acid cycle; succinate from succinyl-CoA (ligase route): step 1/1.</text>
</comment>
<comment type="subunit">
    <text evidence="1">Heterotetramer of two alpha and two beta subunits.</text>
</comment>
<comment type="similarity">
    <text evidence="1">Belongs to the succinate/malate CoA ligase beta subunit family.</text>
</comment>
<name>SUCC_PSEPW</name>